<name>GAR3_HUMAN</name>
<reference key="1">
    <citation type="journal article" date="2004" name="Nat. Genet.">
        <title>Complete sequencing and characterization of 21,243 full-length human cDNAs.</title>
        <authorList>
            <person name="Ota T."/>
            <person name="Suzuki Y."/>
            <person name="Nishikawa T."/>
            <person name="Otsuki T."/>
            <person name="Sugiyama T."/>
            <person name="Irie R."/>
            <person name="Wakamatsu A."/>
            <person name="Hayashi K."/>
            <person name="Sato H."/>
            <person name="Nagai K."/>
            <person name="Kimura K."/>
            <person name="Makita H."/>
            <person name="Sekine M."/>
            <person name="Obayashi M."/>
            <person name="Nishi T."/>
            <person name="Shibahara T."/>
            <person name="Tanaka T."/>
            <person name="Ishii S."/>
            <person name="Yamamoto J."/>
            <person name="Saito K."/>
            <person name="Kawai Y."/>
            <person name="Isono Y."/>
            <person name="Nakamura Y."/>
            <person name="Nagahari K."/>
            <person name="Murakami K."/>
            <person name="Yasuda T."/>
            <person name="Iwayanagi T."/>
            <person name="Wagatsuma M."/>
            <person name="Shiratori A."/>
            <person name="Sudo H."/>
            <person name="Hosoiri T."/>
            <person name="Kaku Y."/>
            <person name="Kodaira H."/>
            <person name="Kondo H."/>
            <person name="Sugawara M."/>
            <person name="Takahashi M."/>
            <person name="Kanda K."/>
            <person name="Yokoi T."/>
            <person name="Furuya T."/>
            <person name="Kikkawa E."/>
            <person name="Omura Y."/>
            <person name="Abe K."/>
            <person name="Kamihara K."/>
            <person name="Katsuta N."/>
            <person name="Sato K."/>
            <person name="Tanikawa M."/>
            <person name="Yamazaki M."/>
            <person name="Ninomiya K."/>
            <person name="Ishibashi T."/>
            <person name="Yamashita H."/>
            <person name="Murakawa K."/>
            <person name="Fujimori K."/>
            <person name="Tanai H."/>
            <person name="Kimata M."/>
            <person name="Watanabe M."/>
            <person name="Hiraoka S."/>
            <person name="Chiba Y."/>
            <person name="Ishida S."/>
            <person name="Ono Y."/>
            <person name="Takiguchi S."/>
            <person name="Watanabe S."/>
            <person name="Yosida M."/>
            <person name="Hotuta T."/>
            <person name="Kusano J."/>
            <person name="Kanehori K."/>
            <person name="Takahashi-Fujii A."/>
            <person name="Hara H."/>
            <person name="Tanase T.-O."/>
            <person name="Nomura Y."/>
            <person name="Togiya S."/>
            <person name="Komai F."/>
            <person name="Hara R."/>
            <person name="Takeuchi K."/>
            <person name="Arita M."/>
            <person name="Imose N."/>
            <person name="Musashino K."/>
            <person name="Yuuki H."/>
            <person name="Oshima A."/>
            <person name="Sasaki N."/>
            <person name="Aotsuka S."/>
            <person name="Yoshikawa Y."/>
            <person name="Matsunawa H."/>
            <person name="Ichihara T."/>
            <person name="Shiohata N."/>
            <person name="Sano S."/>
            <person name="Moriya S."/>
            <person name="Momiyama H."/>
            <person name="Satoh N."/>
            <person name="Takami S."/>
            <person name="Terashima Y."/>
            <person name="Suzuki O."/>
            <person name="Nakagawa S."/>
            <person name="Senoh A."/>
            <person name="Mizoguchi H."/>
            <person name="Goto Y."/>
            <person name="Shimizu F."/>
            <person name="Wakebe H."/>
            <person name="Hishigaki H."/>
            <person name="Watanabe T."/>
            <person name="Sugiyama A."/>
            <person name="Takemoto M."/>
            <person name="Kawakami B."/>
            <person name="Yamazaki M."/>
            <person name="Watanabe K."/>
            <person name="Kumagai A."/>
            <person name="Itakura S."/>
            <person name="Fukuzumi Y."/>
            <person name="Fujimori Y."/>
            <person name="Komiyama M."/>
            <person name="Tashiro H."/>
            <person name="Tanigami A."/>
            <person name="Fujiwara T."/>
            <person name="Ono T."/>
            <person name="Yamada K."/>
            <person name="Fujii Y."/>
            <person name="Ozaki K."/>
            <person name="Hirao M."/>
            <person name="Ohmori Y."/>
            <person name="Kawabata A."/>
            <person name="Hikiji T."/>
            <person name="Kobatake N."/>
            <person name="Inagaki H."/>
            <person name="Ikema Y."/>
            <person name="Okamoto S."/>
            <person name="Okitani R."/>
            <person name="Kawakami T."/>
            <person name="Noguchi S."/>
            <person name="Itoh T."/>
            <person name="Shigeta K."/>
            <person name="Senba T."/>
            <person name="Matsumura K."/>
            <person name="Nakajima Y."/>
            <person name="Mizuno T."/>
            <person name="Morinaga M."/>
            <person name="Sasaki M."/>
            <person name="Togashi T."/>
            <person name="Oyama M."/>
            <person name="Hata H."/>
            <person name="Watanabe M."/>
            <person name="Komatsu T."/>
            <person name="Mizushima-Sugano J."/>
            <person name="Satoh T."/>
            <person name="Shirai Y."/>
            <person name="Takahashi Y."/>
            <person name="Nakagawa K."/>
            <person name="Okumura K."/>
            <person name="Nagase T."/>
            <person name="Nomura N."/>
            <person name="Kikuchi H."/>
            <person name="Masuho Y."/>
            <person name="Yamashita R."/>
            <person name="Nakai K."/>
            <person name="Yada T."/>
            <person name="Nakamura Y."/>
            <person name="Ohara O."/>
            <person name="Isogai T."/>
            <person name="Sugano S."/>
        </authorList>
    </citation>
    <scope>NUCLEOTIDE SEQUENCE [LARGE SCALE MRNA]</scope>
    <scope>VARIANT THR-564</scope>
    <source>
        <tissue>Testis</tissue>
    </source>
</reference>
<reference key="2">
    <citation type="submission" date="2005-03" db="EMBL/GenBank/DDBJ databases">
        <title>A new spermatogenesis-related gene.</title>
        <authorList>
            <person name="Wang Y."/>
            <person name="Miao S.Y."/>
            <person name="Zhang X.D."/>
            <person name="Qiao Y."/>
            <person name="Liang G."/>
            <person name="Wang L.F."/>
        </authorList>
    </citation>
    <scope>NUCLEOTIDE SEQUENCE [LARGE SCALE MRNA]</scope>
    <source>
        <tissue>Testis</tissue>
    </source>
</reference>
<reference key="3">
    <citation type="journal article" date="2004" name="Genome Res.">
        <title>The status, quality, and expansion of the NIH full-length cDNA project: the Mammalian Gene Collection (MGC).</title>
        <authorList>
            <consortium name="The MGC Project Team"/>
        </authorList>
    </citation>
    <scope>NUCLEOTIDE SEQUENCE [LARGE SCALE MRNA]</scope>
    <scope>VARIANTS VAL-543 AND THR-564</scope>
    <source>
        <tissue>Testis</tissue>
    </source>
</reference>
<reference key="4">
    <citation type="journal article" date="2007" name="Chromosoma">
        <title>FRG1P-mediated aggregation of proteins involved in pre-mRNA processing.</title>
        <authorList>
            <person name="van Koningsbruggen S."/>
            <person name="Straasheijm K.R."/>
            <person name="Sterrenburg E."/>
            <person name="de Graaf N."/>
            <person name="Dauwerse H.G."/>
            <person name="Frants R.R."/>
            <person name="van der Maarel S.M."/>
        </authorList>
    </citation>
    <scope>FUNCTION</scope>
    <scope>SUBCELLULAR LOCATION</scope>
    <scope>INTERACTION WITH FRG1</scope>
</reference>
<reference key="5">
    <citation type="journal article" date="2015" name="Biol. Reprod.">
        <title>Combining RNA and protein profiling data with network interactions identifies genes associated with spermatogenesis in mouse and human.</title>
        <authorList>
            <person name="Petit F.G."/>
            <person name="Kervarrec C."/>
            <person name="Jamin S.P."/>
            <person name="Smagulova F."/>
            <person name="Hao C."/>
            <person name="Becker E."/>
            <person name="Jegou B."/>
            <person name="Chalmel F."/>
            <person name="Primig M."/>
        </authorList>
    </citation>
    <scope>TISSUE SPECIFICITY</scope>
</reference>
<protein>
    <recommendedName>
        <fullName evidence="9">Golgi-associated RAB2 interactor protein 3</fullName>
    </recommendedName>
</protein>
<dbReference type="EMBL" id="AK057543">
    <property type="protein sequence ID" value="BAB71526.1"/>
    <property type="molecule type" value="mRNA"/>
</dbReference>
<dbReference type="EMBL" id="AY973323">
    <property type="protein sequence ID" value="AAY41236.1"/>
    <property type="molecule type" value="mRNA"/>
</dbReference>
<dbReference type="EMBL" id="BC022035">
    <property type="protein sequence ID" value="AAH22035.1"/>
    <property type="molecule type" value="mRNA"/>
</dbReference>
<dbReference type="EMBL" id="BC025397">
    <property type="protein sequence ID" value="AAH25397.1"/>
    <property type="molecule type" value="mRNA"/>
</dbReference>
<dbReference type="EMBL" id="BC025409">
    <property type="protein sequence ID" value="AAH25409.1"/>
    <property type="molecule type" value="mRNA"/>
</dbReference>
<dbReference type="EMBL" id="BC025998">
    <property type="protein sequence ID" value="AAH25998.1"/>
    <property type="molecule type" value="mRNA"/>
</dbReference>
<dbReference type="CCDS" id="CCDS4335.1"/>
<dbReference type="RefSeq" id="NP_570969.2">
    <property type="nucleotide sequence ID" value="NM_130899.3"/>
</dbReference>
<dbReference type="BioGRID" id="127515">
    <property type="interactions" value="3"/>
</dbReference>
<dbReference type="FunCoup" id="Q8TC56">
    <property type="interactions" value="72"/>
</dbReference>
<dbReference type="IntAct" id="Q8TC56">
    <property type="interactions" value="1"/>
</dbReference>
<dbReference type="MINT" id="Q8TC56"/>
<dbReference type="STRING" id="9606.ENSP00000305596"/>
<dbReference type="GlyGen" id="Q8TC56">
    <property type="glycosylation" value="7 sites, 1 N-linked glycan (1 site), 1 O-linked glycan (3 sites)"/>
</dbReference>
<dbReference type="iPTMnet" id="Q8TC56"/>
<dbReference type="PhosphoSitePlus" id="Q8TC56"/>
<dbReference type="BioMuta" id="FAM71B"/>
<dbReference type="DMDM" id="146286168"/>
<dbReference type="MassIVE" id="Q8TC56"/>
<dbReference type="PaxDb" id="9606-ENSP00000305596"/>
<dbReference type="PeptideAtlas" id="Q8TC56"/>
<dbReference type="ProteomicsDB" id="74089"/>
<dbReference type="Antibodypedia" id="28391">
    <property type="antibodies" value="44 antibodies from 10 providers"/>
</dbReference>
<dbReference type="DNASU" id="153745"/>
<dbReference type="Ensembl" id="ENST00000302938.4">
    <property type="protein sequence ID" value="ENSP00000305596.4"/>
    <property type="gene ID" value="ENSG00000170613.4"/>
</dbReference>
<dbReference type="GeneID" id="153745"/>
<dbReference type="KEGG" id="hsa:153745"/>
<dbReference type="MANE-Select" id="ENST00000302938.4">
    <property type="protein sequence ID" value="ENSP00000305596.4"/>
    <property type="RefSeq nucleotide sequence ID" value="NM_130899.3"/>
    <property type="RefSeq protein sequence ID" value="NP_570969.2"/>
</dbReference>
<dbReference type="UCSC" id="uc003lwn.4">
    <property type="organism name" value="human"/>
</dbReference>
<dbReference type="AGR" id="HGNC:28397"/>
<dbReference type="CTD" id="153745"/>
<dbReference type="DisGeNET" id="153745"/>
<dbReference type="GeneCards" id="GARIN3"/>
<dbReference type="HGNC" id="HGNC:28397">
    <property type="gene designation" value="GARIN3"/>
</dbReference>
<dbReference type="HPA" id="ENSG00000170613">
    <property type="expression patterns" value="Tissue enriched (testis)"/>
</dbReference>
<dbReference type="MIM" id="619883">
    <property type="type" value="gene"/>
</dbReference>
<dbReference type="neXtProt" id="NX_Q8TC56"/>
<dbReference type="OpenTargets" id="ENSG00000170613"/>
<dbReference type="VEuPathDB" id="HostDB:ENSG00000170613"/>
<dbReference type="eggNOG" id="ENOG502S0XQ">
    <property type="taxonomic scope" value="Eukaryota"/>
</dbReference>
<dbReference type="GeneTree" id="ENSGT00940000162063"/>
<dbReference type="HOGENOM" id="CLU_035424_0_0_1"/>
<dbReference type="InParanoid" id="Q8TC56"/>
<dbReference type="OMA" id="TREDLFC"/>
<dbReference type="OrthoDB" id="15397at9604"/>
<dbReference type="PAN-GO" id="Q8TC56">
    <property type="GO annotations" value="0 GO annotations based on evolutionary models"/>
</dbReference>
<dbReference type="PhylomeDB" id="Q8TC56"/>
<dbReference type="TreeFam" id="TF336050"/>
<dbReference type="PathwayCommons" id="Q8TC56"/>
<dbReference type="SignaLink" id="Q8TC56"/>
<dbReference type="BioGRID-ORCS" id="153745">
    <property type="hits" value="4 hits in 1142 CRISPR screens"/>
</dbReference>
<dbReference type="CD-CODE" id="804901D1">
    <property type="entry name" value="Nuclear speckle"/>
</dbReference>
<dbReference type="GenomeRNAi" id="153745"/>
<dbReference type="Pharos" id="Q8TC56">
    <property type="development level" value="Tdark"/>
</dbReference>
<dbReference type="PRO" id="PR:Q8TC56"/>
<dbReference type="Proteomes" id="UP000005640">
    <property type="component" value="Chromosome 5"/>
</dbReference>
<dbReference type="RNAct" id="Q8TC56">
    <property type="molecule type" value="protein"/>
</dbReference>
<dbReference type="Bgee" id="ENSG00000170613">
    <property type="expression patterns" value="Expressed in male germ line stem cell (sensu Vertebrata) in testis and 21 other cell types or tissues"/>
</dbReference>
<dbReference type="ExpressionAtlas" id="Q8TC56">
    <property type="expression patterns" value="baseline and differential"/>
</dbReference>
<dbReference type="GO" id="GO:0015030">
    <property type="term" value="C:Cajal body"/>
    <property type="evidence" value="ECO:0007669"/>
    <property type="project" value="UniProtKB-SubCell"/>
</dbReference>
<dbReference type="GO" id="GO:0005794">
    <property type="term" value="C:Golgi apparatus"/>
    <property type="evidence" value="ECO:0000250"/>
    <property type="project" value="UniProtKB"/>
</dbReference>
<dbReference type="GO" id="GO:0005634">
    <property type="term" value="C:nucleus"/>
    <property type="evidence" value="ECO:0007005"/>
    <property type="project" value="UniProtKB"/>
</dbReference>
<dbReference type="GO" id="GO:0061827">
    <property type="term" value="C:sperm head"/>
    <property type="evidence" value="ECO:0007669"/>
    <property type="project" value="Ensembl"/>
</dbReference>
<dbReference type="GO" id="GO:0001675">
    <property type="term" value="P:acrosome assembly"/>
    <property type="evidence" value="ECO:0007669"/>
    <property type="project" value="Ensembl"/>
</dbReference>
<dbReference type="GO" id="GO:0007339">
    <property type="term" value="P:binding of sperm to zona pellucida"/>
    <property type="evidence" value="ECO:0007669"/>
    <property type="project" value="Ensembl"/>
</dbReference>
<dbReference type="GO" id="GO:0000902">
    <property type="term" value="P:cell morphogenesis"/>
    <property type="evidence" value="ECO:0007669"/>
    <property type="project" value="Ensembl"/>
</dbReference>
<dbReference type="GO" id="GO:0030317">
    <property type="term" value="P:flagellated sperm motility"/>
    <property type="evidence" value="ECO:0007669"/>
    <property type="project" value="Ensembl"/>
</dbReference>
<dbReference type="GO" id="GO:0007341">
    <property type="term" value="P:penetration of zona pellucida"/>
    <property type="evidence" value="ECO:0007669"/>
    <property type="project" value="Ensembl"/>
</dbReference>
<dbReference type="InterPro" id="IPR022168">
    <property type="entry name" value="GARIL-like_Rab2B-bd"/>
</dbReference>
<dbReference type="PANTHER" id="PTHR22574">
    <property type="match status" value="1"/>
</dbReference>
<dbReference type="PANTHER" id="PTHR22574:SF2">
    <property type="entry name" value="GOLGI-ASSOCIATED RAB2 INTERACTOR PROTEIN 3"/>
    <property type="match status" value="1"/>
</dbReference>
<dbReference type="Pfam" id="PF12480">
    <property type="entry name" value="GARIL_Rab2_bd"/>
    <property type="match status" value="1"/>
</dbReference>
<sequence>MSNESCLPYYTAHSYSSMSAFKTSMGDLQRQLYNRGEYNIFKYAPMFESNFIQINKKGEVIDVHNRVRMVTVGIVCTSPILPLPDVMVLAQPTKICEQHVRWGRFAKGRGRRPVKTLELTRLLPLKFVKISIHDHEKQQLRLKLATGRTFYLQLCPSSDTREDLFCYWEKLVYLLRPPVESYCSTPTLLSGDAPPEDNKSLVAAELHREGDQSETGLYKPCDVSAATSSAYAGGEGIQHASHGTASAASPSTSTPGAAEGGAARTAGGMAVAGTATGPRTDVAIAGAAMSPATGAMSIATTKSAGPGQVTTALAGAAIKNPGENESSKSMAGAANISSEGISLALVGAASTSLEGTSTSMAGAASLSQDSSLSAAFAGSITTSKCAAERTEGPAVGPLISTLQSEGYMSERDGSQKVSQPSAEVWNENKERREKKDRHPSRKSSHHRKAGESHRRRAGDKNQKASSHRSASGHKNTRDDKKEKGYSNVRGKRHGSSRKSSTHSSTKKESRTTQELGKNQSASSTGALQKKASKISSFLRSLRATPGSKTRVTSHDREVDIVAKMVEKQNIEAKVEKAQGGQELEMISGTMTSEKTEMIVFETKSI</sequence>
<keyword id="KW-0333">Golgi apparatus</keyword>
<keyword id="KW-0539">Nucleus</keyword>
<keyword id="KW-0597">Phosphoprotein</keyword>
<keyword id="KW-1267">Proteomics identification</keyword>
<keyword id="KW-1185">Reference proteome</keyword>
<proteinExistence type="evidence at protein level"/>
<organism>
    <name type="scientific">Homo sapiens</name>
    <name type="common">Human</name>
    <dbReference type="NCBI Taxonomy" id="9606"/>
    <lineage>
        <taxon>Eukaryota</taxon>
        <taxon>Metazoa</taxon>
        <taxon>Chordata</taxon>
        <taxon>Craniata</taxon>
        <taxon>Vertebrata</taxon>
        <taxon>Euteleostomi</taxon>
        <taxon>Mammalia</taxon>
        <taxon>Eutheria</taxon>
        <taxon>Euarchontoglires</taxon>
        <taxon>Primates</taxon>
        <taxon>Haplorrhini</taxon>
        <taxon>Catarrhini</taxon>
        <taxon>Hominidae</taxon>
        <taxon>Homo</taxon>
    </lineage>
</organism>
<accession>Q8TC56</accession>
<accession>Q1EDD9</accession>
<accession>Q8TC64</accession>
<accession>Q96LY8</accession>
<comment type="function">
    <text evidence="7">May be involved in RNA biogenesis.</text>
</comment>
<comment type="subunit">
    <text evidence="1 7">Interacts (via N-terminus) with RAB2B (in GTP-bound form) (By similarity). Interacts with FRG1 (PubMed:17103222).</text>
</comment>
<comment type="subcellular location">
    <subcellularLocation>
        <location evidence="1">Golgi apparatus</location>
    </subcellularLocation>
    <subcellularLocation>
        <location evidence="7">Nucleus</location>
        <location evidence="7">Cajal body</location>
    </subcellularLocation>
</comment>
<comment type="tissue specificity">
    <text evidence="8">Expressed in adult spermatocytes and spermatids (at protein level).</text>
</comment>
<comment type="similarity">
    <text evidence="9">Belongs to the GARIN family.</text>
</comment>
<feature type="chain" id="PRO_0000285643" description="Golgi-associated RAB2 interactor protein 3">
    <location>
        <begin position="1"/>
        <end position="605"/>
    </location>
</feature>
<feature type="region of interest" description="Disordered" evidence="4">
    <location>
        <begin position="234"/>
        <end position="265"/>
    </location>
</feature>
<feature type="region of interest" description="Disordered" evidence="4">
    <location>
        <begin position="407"/>
        <end position="529"/>
    </location>
</feature>
<feature type="short sequence motif" description="Bipartite nuclear localization signal" evidence="3">
    <location>
        <begin position="441"/>
        <end position="458"/>
    </location>
</feature>
<feature type="compositionally biased region" description="Low complexity" evidence="4">
    <location>
        <begin position="239"/>
        <end position="265"/>
    </location>
</feature>
<feature type="compositionally biased region" description="Basic residues" evidence="4">
    <location>
        <begin position="434"/>
        <end position="457"/>
    </location>
</feature>
<feature type="compositionally biased region" description="Polar residues" evidence="4">
    <location>
        <begin position="463"/>
        <end position="473"/>
    </location>
</feature>
<feature type="compositionally biased region" description="Basic and acidic residues" evidence="4">
    <location>
        <begin position="475"/>
        <end position="484"/>
    </location>
</feature>
<feature type="compositionally biased region" description="Basic residues" evidence="4">
    <location>
        <begin position="489"/>
        <end position="500"/>
    </location>
</feature>
<feature type="compositionally biased region" description="Polar residues" evidence="4">
    <location>
        <begin position="513"/>
        <end position="526"/>
    </location>
</feature>
<feature type="modified residue" description="Phosphoserine" evidence="2">
    <location>
        <position position="592"/>
    </location>
</feature>
<feature type="sequence variant" id="VAR_032036" description="In dbSNP:rs17852327." evidence="6">
    <original>A</original>
    <variation>V</variation>
    <location>
        <position position="543"/>
    </location>
</feature>
<feature type="sequence variant" id="VAR_032037" description="In dbSNP:rs31208." evidence="5 6">
    <original>M</original>
    <variation>T</variation>
    <location>
        <position position="564"/>
    </location>
</feature>
<feature type="sequence variant" id="VAR_032038" description="In dbSNP:rs2115480.">
    <original>V</original>
    <variation>I</variation>
    <location>
        <position position="599"/>
    </location>
</feature>
<feature type="sequence conflict" description="In Ref. 2; AAY41236." evidence="9" ref="2">
    <original>T</original>
    <variation>A</variation>
    <location>
        <position position="280"/>
    </location>
</feature>
<gene>
    <name evidence="10" type="primary">GARIN3</name>
    <name type="synonym">FAM71B</name>
    <name type="ORF">HSD-51</name>
    <name type="ORF">HSD51</name>
</gene>
<evidence type="ECO:0000250" key="1">
    <source>
        <dbReference type="UniProtKB" id="Q5STT6"/>
    </source>
</evidence>
<evidence type="ECO:0000250" key="2">
    <source>
        <dbReference type="UniProtKB" id="Q66H38"/>
    </source>
</evidence>
<evidence type="ECO:0000255" key="3"/>
<evidence type="ECO:0000256" key="4">
    <source>
        <dbReference type="SAM" id="MobiDB-lite"/>
    </source>
</evidence>
<evidence type="ECO:0000269" key="5">
    <source>
    </source>
</evidence>
<evidence type="ECO:0000269" key="6">
    <source>
    </source>
</evidence>
<evidence type="ECO:0000269" key="7">
    <source>
    </source>
</evidence>
<evidence type="ECO:0000269" key="8">
    <source>
    </source>
</evidence>
<evidence type="ECO:0000305" key="9"/>
<evidence type="ECO:0000312" key="10">
    <source>
        <dbReference type="HGNC" id="HGNC:28397"/>
    </source>
</evidence>